<name>AAL_LOKAT</name>
<proteinExistence type="evidence at protein level"/>
<organism>
    <name type="scientific">Loktanella atrilutea</name>
    <dbReference type="NCBI Taxonomy" id="366533"/>
    <lineage>
        <taxon>Bacteria</taxon>
        <taxon>Pseudomonadati</taxon>
        <taxon>Pseudomonadota</taxon>
        <taxon>Alphaproteobacteria</taxon>
        <taxon>Rhodobacterales</taxon>
        <taxon>Roseobacteraceae</taxon>
        <taxon>Loktanella</taxon>
    </lineage>
</organism>
<dbReference type="EC" id="4.3.1.-" evidence="4 5"/>
<dbReference type="EMBL" id="FQUE01000002">
    <property type="protein sequence ID" value="SHE94330.1"/>
    <property type="molecule type" value="Genomic_DNA"/>
</dbReference>
<dbReference type="RefSeq" id="WP_178352722.1">
    <property type="nucleotide sequence ID" value="NZ_FQUE01000002.1"/>
</dbReference>
<dbReference type="SMR" id="A0A1M4XLJ3"/>
<dbReference type="STRING" id="366533.SAMN05444339_102525"/>
<dbReference type="UniPathway" id="UPA00713">
    <property type="reaction ID" value="UER00725"/>
</dbReference>
<dbReference type="Proteomes" id="UP000183987">
    <property type="component" value="Unassembled WGS sequence"/>
</dbReference>
<dbReference type="GO" id="GO:0016841">
    <property type="term" value="F:ammonia-lyase activity"/>
    <property type="evidence" value="ECO:0007669"/>
    <property type="project" value="UniProtKB-ARBA"/>
</dbReference>
<dbReference type="GO" id="GO:0006559">
    <property type="term" value="P:L-phenylalanine catabolic process"/>
    <property type="evidence" value="ECO:0007669"/>
    <property type="project" value="UniProtKB-KW"/>
</dbReference>
<dbReference type="GO" id="GO:0009698">
    <property type="term" value="P:phenylpropanoid metabolic process"/>
    <property type="evidence" value="ECO:0007669"/>
    <property type="project" value="UniProtKB-KW"/>
</dbReference>
<dbReference type="CDD" id="cd00332">
    <property type="entry name" value="PAL-HAL"/>
    <property type="match status" value="1"/>
</dbReference>
<dbReference type="Gene3D" id="1.20.200.10">
    <property type="entry name" value="Fumarase/aspartase (Central domain)"/>
    <property type="match status" value="1"/>
</dbReference>
<dbReference type="Gene3D" id="1.10.275.10">
    <property type="entry name" value="Fumarase/aspartase (N-terminal domain)"/>
    <property type="match status" value="1"/>
</dbReference>
<dbReference type="InterPro" id="IPR001106">
    <property type="entry name" value="Aromatic_Lyase"/>
</dbReference>
<dbReference type="InterPro" id="IPR024083">
    <property type="entry name" value="Fumarase/histidase_N"/>
</dbReference>
<dbReference type="InterPro" id="IPR008948">
    <property type="entry name" value="L-Aspartase-like"/>
</dbReference>
<dbReference type="PANTHER" id="PTHR10362">
    <property type="entry name" value="HISTIDINE AMMONIA-LYASE"/>
    <property type="match status" value="1"/>
</dbReference>
<dbReference type="Pfam" id="PF00221">
    <property type="entry name" value="Lyase_aromatic"/>
    <property type="match status" value="1"/>
</dbReference>
<dbReference type="SUPFAM" id="SSF48557">
    <property type="entry name" value="L-aspartase-like"/>
    <property type="match status" value="1"/>
</dbReference>
<protein>
    <recommendedName>
        <fullName evidence="6 7">Aromatic ammonia-lyase</fullName>
        <shortName evidence="6 7">AAL</shortName>
        <ecNumber evidence="4 5">4.3.1.-</ecNumber>
    </recommendedName>
    <alternativeName>
        <fullName evidence="6 7">LaAAL</fullName>
    </alternativeName>
</protein>
<evidence type="ECO:0000250" key="1">
    <source>
        <dbReference type="UniProtKB" id="P11544"/>
    </source>
</evidence>
<evidence type="ECO:0000250" key="2">
    <source>
        <dbReference type="UniProtKB" id="Q3M5Z3"/>
    </source>
</evidence>
<evidence type="ECO:0000250" key="3">
    <source>
        <dbReference type="UniProtKB" id="Q68G84"/>
    </source>
</evidence>
<evidence type="ECO:0000269" key="4">
    <source>
    </source>
</evidence>
<evidence type="ECO:0000269" key="5">
    <source>
    </source>
</evidence>
<evidence type="ECO:0000303" key="6">
    <source>
    </source>
</evidence>
<evidence type="ECO:0000303" key="7">
    <source>
    </source>
</evidence>
<evidence type="ECO:0000305" key="8"/>
<evidence type="ECO:0000312" key="9">
    <source>
        <dbReference type="EMBL" id="SHE94330.1"/>
    </source>
</evidence>
<gene>
    <name evidence="6" type="primary">pal</name>
    <name evidence="9" type="ORF">SAMN05444339_102525</name>
</gene>
<reference key="1">
    <citation type="submission" date="2016-11" db="EMBL/GenBank/DDBJ databases">
        <authorList>
            <person name="Jaros S."/>
            <person name="Januszkiewicz K."/>
            <person name="Wedrychowicz H."/>
        </authorList>
    </citation>
    <scope>NUCLEOTIDE SEQUENCE [LARGE SCALE GENOMIC DNA]</scope>
    <source>
        <strain>DSM 29326 / JCM 23210 / IAM 15450 / NCIMB 14280 / IG8</strain>
    </source>
</reference>
<reference key="2">
    <citation type="journal article" date="2023" name="Appl. Microbiol. Biotechnol.">
        <title>Phenylalanine ammonia-lyases: combining protein engineering and natural diversity.</title>
        <authorList>
            <person name="Tomoiaga R.B."/>
            <person name="Tork S.D."/>
            <person name="Filip A."/>
            <person name="Nagy L.C."/>
            <person name="Bencze L.C."/>
        </authorList>
    </citation>
    <scope>FUNCTION</scope>
    <scope>CATALYTIC ACTIVITY</scope>
    <scope>BIOPHYSICOCHEMICAL PROPERTIES</scope>
</reference>
<reference key="3">
    <citation type="journal article" date="2024" name="ChemBioChem">
        <title>The Biocatalytic Potential of Aromatic Ammonia-Lyase from Loktanella atrilutea.</title>
        <authorList>
            <person name="Tomoaiaga R.B."/>
            <person name="Agoston G."/>
            <person name="Boros K."/>
            <person name="Nagy L.C."/>
            <person name="Tosa M.I."/>
            <person name="Paizs C."/>
            <person name="Bencze L.C."/>
        </authorList>
    </citation>
    <scope>FUNCTION</scope>
    <scope>CATALYTIC ACTIVITY</scope>
    <scope>BIOPHYSICOCHEMICAL PROPERTIES</scope>
    <scope>BIOTECHNOLOGY</scope>
    <scope>SUBUNIT</scope>
</reference>
<sequence>MTITLDGASLTLADIDAVARGGAKVAITGDADVLARVHGSRDVIARAVERGEEIYGVTTLFGGMADVHVTRDQLIDVQKIALWQHKSTTGPRLPDADVRAAMLLRANSLMRGASGVRIALIERLVAFLNAGASPQVYQRGSIGASGDLVPLTYIGASILGLSPEFLVDLDGETLDCHTVLAKLGFTPMDPDPKEGLALNNGTGACTGVAANVMARALDAATMALGVHALFAQALLATDQSFDPYIHAQKPHPGQVWSAARMAELLTGGRTIRSEAGGDRARRKGDLIQDRYGIRCLPQFFGPIVDGLSTAARQIETEANTANDNPLINPATGETFHTGNFLAQYTAIAMDSTRYLIGLMCKHIDSQIALMITPAFSNGLTPALVGNMDTGVNVGLKSLHIGMNQMSTQISYLGQSVADRFPTHAEMYNQNINSQAMNAANLARDQMDVTEHFLAAALLTGVQAVEVRSRVETGSCDARDILSPATVPLYEAARVAAAGRPDKARTIVWDDMDGFLQPKVEGLLADIGSRGNVHAALQALRSSLDTFRA</sequence>
<comment type="function">
    <text evidence="4 5">Aromatic ammonia-lyase (AAL) that shows reduced activity to catalyze the non-oxidative ammonia elimination from the canonical AAL substrates L-Phe and L-Tyr, contrasted by its pronounced efficiency towards substrates with electron-donor aromatic substituents such as 3,4-dimethoxy-L-phenylalanine. Is also able to catalyze the reverse reaction in vitro, i.e. the ammonia addition reaction to cinnamate derivatives, producing enantiopure phenylalanine derivatives. Shows no activity with L-His.</text>
</comment>
<comment type="catalytic activity">
    <reaction evidence="5">
        <text>L-phenylalanine = (E)-cinnamate + NH4(+)</text>
        <dbReference type="Rhea" id="RHEA:21384"/>
        <dbReference type="ChEBI" id="CHEBI:15669"/>
        <dbReference type="ChEBI" id="CHEBI:28938"/>
        <dbReference type="ChEBI" id="CHEBI:58095"/>
    </reaction>
</comment>
<comment type="catalytic activity">
    <reaction evidence="5">
        <text>L-tyrosine = (E)-4-coumarate + NH4(+)</text>
        <dbReference type="Rhea" id="RHEA:24906"/>
        <dbReference type="ChEBI" id="CHEBI:12876"/>
        <dbReference type="ChEBI" id="CHEBI:28938"/>
        <dbReference type="ChEBI" id="CHEBI:58315"/>
    </reaction>
</comment>
<comment type="catalytic activity">
    <reaction evidence="4 5">
        <text>3,4-dimethoxy-L-phenylalanine = 3,4-dimethoxy-(E)-cinnamate + NH4(+)</text>
        <dbReference type="Rhea" id="RHEA:79235"/>
        <dbReference type="ChEBI" id="CHEBI:28938"/>
        <dbReference type="ChEBI" id="CHEBI:229727"/>
        <dbReference type="ChEBI" id="CHEBI:229728"/>
    </reaction>
</comment>
<comment type="biophysicochemical properties">
    <kinetics>
        <KM evidence="5">5.88 mM for L-phenylalanine</KM>
        <KM evidence="5">1.11 mM for 3,4-dimethoxy-L-phenylalanine</KM>
        <KM evidence="4">2.55 mM for 3,4-dimethoxy-L-phenylalanine</KM>
        <KM evidence="5">0.29 mM for L-meta-tyrosine</KM>
        <KM evidence="5">0.27 mM for 3-methoxy-L-phenylalanine</KM>
        <KM evidence="5">2.59 mM for 3,4,5-trimethoxy-L-phenylalanine</KM>
        <KM evidence="5">4.75 mM for 3,4-dimethoxy-(E)-cinnamate</KM>
        <text evidence="4 5">kcat is 0.51 sec(-1) for the ammonia elimination reaction from L-phenylalanine (PubMed:38415939). kcat is 1.14 sec(-1) for the ammonia elimination reaction from 3,4-dimethoxy-L-phenylalanine (PubMed:38415939). kcat is 0.64 sec(-1) for the ammonia elimination reaction from 3,4-dimethoxy-L-phenylalanine (PubMed:36662259). kcat is 0.63 sec(-1) for the ammonia elimination reaction from L-meta-tyrosine (PubMed:38415939). kcat is 1.72 sec(-1) for the ammonia elimination reaction from 3-methoxy-L-phenylalanine (PubMed:38415939). kcat is 0.77 sec(-1) for the ammonia elimination reaction from 3,4,5-trimethoxy-L-phenylalanine (PubMed:38415939). kcat is 0.81 sec(-1) for the ammonia addition reaction to 3,4-dimethoxy-(E)-cinnamate (PubMed:38415939).</text>
    </kinetics>
    <phDependence>
        <text evidence="5">Optimum pH is 9.5 for the ammonia elimination reaction from 3,4-dimethoxy-L-phenylalanine. Optimum pH is 9.0 for the ammonia addition reaction to 3,4-dimethoxy-(E)-cinnamate.</text>
    </phDependence>
    <temperatureDependence>
        <text evidence="4">Is thermostable, showing a high melting temperature of 82 degrees Celsius.</text>
    </temperatureDependence>
</comment>
<comment type="pathway">
    <text evidence="2">Phenylpropanoid metabolism; trans-cinnamate biosynthesis; trans-cinnamate from L-phenylalanine: step 1/1.</text>
</comment>
<comment type="subunit">
    <text evidence="5">Homotetramer.</text>
</comment>
<comment type="PTM">
    <text evidence="3">Contains an active site 4-methylidene-imidazol-5-one (MIO), which is formed autocatalytically by cyclization and dehydration of residues Ala-Ser-Gly.</text>
</comment>
<comment type="biotechnology">
    <text evidence="5">Is an attractive biocatalyst for the production of enantiopure phenylalanine analogs, such as 3,4-dimethoxy-L-phenylalanine which is a key building block for the anti-Parkinson drug L-DOPA.</text>
</comment>
<comment type="similarity">
    <text evidence="8">Belongs to the PAL/histidase family.</text>
</comment>
<feature type="chain" id="PRO_0000460487" description="Aromatic ammonia-lyase">
    <location>
        <begin position="1"/>
        <end position="548"/>
    </location>
</feature>
<feature type="active site" description="Proton donor/acceptor" evidence="3">
    <location>
        <position position="55"/>
    </location>
</feature>
<feature type="binding site" evidence="3">
    <location>
        <position position="200"/>
    </location>
    <ligand>
        <name>(E)-cinnamate</name>
        <dbReference type="ChEBI" id="CHEBI:15669"/>
    </ligand>
</feature>
<feature type="binding site" evidence="3">
    <location>
        <position position="288"/>
    </location>
    <ligand>
        <name>(E)-cinnamate</name>
        <dbReference type="ChEBI" id="CHEBI:15669"/>
    </ligand>
</feature>
<feature type="binding site" evidence="3">
    <location>
        <position position="294"/>
    </location>
    <ligand>
        <name>(E)-cinnamate</name>
        <dbReference type="ChEBI" id="CHEBI:15669"/>
    </ligand>
</feature>
<feature type="binding site" evidence="3">
    <location>
        <position position="324"/>
    </location>
    <ligand>
        <name>(E)-cinnamate</name>
        <dbReference type="ChEBI" id="CHEBI:15669"/>
    </ligand>
</feature>
<feature type="binding site" evidence="1">
    <location>
        <position position="396"/>
    </location>
    <ligand>
        <name>(E)-cinnamate</name>
        <dbReference type="ChEBI" id="CHEBI:15669"/>
    </ligand>
</feature>
<feature type="binding site" evidence="1">
    <location>
        <position position="425"/>
    </location>
    <ligand>
        <name>(E)-cinnamate</name>
        <dbReference type="ChEBI" id="CHEBI:15669"/>
    </ligand>
</feature>
<feature type="binding site" evidence="3">
    <location>
        <position position="428"/>
    </location>
    <ligand>
        <name>(E)-cinnamate</name>
        <dbReference type="ChEBI" id="CHEBI:15669"/>
    </ligand>
</feature>
<feature type="modified residue" description="2,3-didehydroalanine (Ser)" evidence="2">
    <location>
        <position position="145"/>
    </location>
</feature>
<feature type="cross-link" description="5-imidazolinone (Ala-Gly)" evidence="2">
    <location>
        <begin position="144"/>
        <end position="146"/>
    </location>
</feature>
<keyword id="KW-0456">Lyase</keyword>
<keyword id="KW-0585">Phenylalanine catabolism</keyword>
<keyword id="KW-0587">Phenylpropanoid metabolism</keyword>
<keyword id="KW-1185">Reference proteome</keyword>
<accession>A0A1M4XLJ3</accession>